<evidence type="ECO:0000250" key="1"/>
<evidence type="ECO:0000255" key="2">
    <source>
        <dbReference type="HAMAP-Rule" id="MF_00100"/>
    </source>
</evidence>
<evidence type="ECO:0000256" key="3">
    <source>
        <dbReference type="SAM" id="MobiDB-lite"/>
    </source>
</evidence>
<accession>Q3YX73</accession>
<sequence length="890" mass="97331">MTDVTIKTLAAERQTSVERLVQQFADAGIRKSADDSVSAQEKQTLIDHLNQKNSGPDKLTLQRKTRSTLNIPGTGGKSKSVQIEVRKKRTFVKRDPQEAERLAAEEQAQREAEEQARREAEESAKREAQQKAEREAAEQAKREAAEQAKREAAEKDKVSNQQDDMTKNAQAEKARREQEAAELKRKAEEEAHRKLEEEARRVAEEARRMAEENKWTDNAEPTEDSSDYHVTTSQHARQAEDESDREVEGGRGRGRNAKAARPKKGNKHAESKADREEARAAVRGGKGGKRKGSSLQQGFQKPAQAVNRDVVIGETITVGELANKMAVKGSQVIKAMMKLGAMATINQVIDQETAQLVAEEMGHKVILRRENELEEAVMSDRDTGAAAEPRAPVVTIMGHVDHGKTSLLDYIRSTKVASGEAGGITQHIGAYHVETENGMITFLDTPGHAAFTSMRARGAQATDIVVLVVAADDGVMPQTIEAIQHAKAAQVPVVVAVNKIDKPEADPDRVKNELSQYGILPEEWGGESQFVHVSAKAGTGIDELLDAILLQAEVLELKAVRKGMASGAVIESFLDKGRGPVATVLVREGTLHKGDIVLCGFEYGRVRAMRNELGQEVLEAGPSIPVEILGLSGVPAAGDEVTVVRDEKKAREVALYRQGKFREVKLARQQKSKLENMFANMTEGEVHEVNIVLKADVQGSVEAISDSLLKLSTDEVKVKIIGSGVGGITETDATLAAASNAILVGFNVRADASARKVIEAESLDLRYYSVIYNLIDEVKAAMSGMLSPELKQQIIGLAEVRDVFKSPKFGAIAGCMVTEGVVKRHNPIRVLRDNVVIYEGELESLRRFKDDVNEVRNGMECGIGVKNYNDVRTGDVIEVFEIIEIQRTIA</sequence>
<reference key="1">
    <citation type="journal article" date="2005" name="Nucleic Acids Res.">
        <title>Genome dynamics and diversity of Shigella species, the etiologic agents of bacillary dysentery.</title>
        <authorList>
            <person name="Yang F."/>
            <person name="Yang J."/>
            <person name="Zhang X."/>
            <person name="Chen L."/>
            <person name="Jiang Y."/>
            <person name="Yan Y."/>
            <person name="Tang X."/>
            <person name="Wang J."/>
            <person name="Xiong Z."/>
            <person name="Dong J."/>
            <person name="Xue Y."/>
            <person name="Zhu Y."/>
            <person name="Xu X."/>
            <person name="Sun L."/>
            <person name="Chen S."/>
            <person name="Nie H."/>
            <person name="Peng J."/>
            <person name="Xu J."/>
            <person name="Wang Y."/>
            <person name="Yuan Z."/>
            <person name="Wen Y."/>
            <person name="Yao Z."/>
            <person name="Shen Y."/>
            <person name="Qiang B."/>
            <person name="Hou Y."/>
            <person name="Yu J."/>
            <person name="Jin Q."/>
        </authorList>
    </citation>
    <scope>NUCLEOTIDE SEQUENCE [LARGE SCALE GENOMIC DNA]</scope>
    <source>
        <strain>Ss046</strain>
    </source>
</reference>
<comment type="function">
    <text evidence="2">One of the essential components for the initiation of protein synthesis. Protects formylmethionyl-tRNA from spontaneous hydrolysis and promotes its binding to the 30S ribosomal subunits. Also involved in the hydrolysis of GTP during the formation of the 70S ribosomal complex.</text>
</comment>
<comment type="subcellular location">
    <subcellularLocation>
        <location evidence="2">Cytoplasm</location>
    </subcellularLocation>
</comment>
<comment type="similarity">
    <text evidence="2">Belongs to the TRAFAC class translation factor GTPase superfamily. Classic translation factor GTPase family. IF-2 subfamily.</text>
</comment>
<dbReference type="EMBL" id="CP000038">
    <property type="protein sequence ID" value="AAZ89889.1"/>
    <property type="molecule type" value="Genomic_DNA"/>
</dbReference>
<dbReference type="RefSeq" id="WP_000133038.1">
    <property type="nucleotide sequence ID" value="NC_007384.1"/>
</dbReference>
<dbReference type="SMR" id="Q3YX73"/>
<dbReference type="GeneID" id="93778815"/>
<dbReference type="KEGG" id="ssn:SSON_3314"/>
<dbReference type="HOGENOM" id="CLU_006301_6_3_6"/>
<dbReference type="Proteomes" id="UP000002529">
    <property type="component" value="Chromosome"/>
</dbReference>
<dbReference type="GO" id="GO:0005829">
    <property type="term" value="C:cytosol"/>
    <property type="evidence" value="ECO:0007669"/>
    <property type="project" value="TreeGrafter"/>
</dbReference>
<dbReference type="GO" id="GO:0005525">
    <property type="term" value="F:GTP binding"/>
    <property type="evidence" value="ECO:0007669"/>
    <property type="project" value="UniProtKB-KW"/>
</dbReference>
<dbReference type="GO" id="GO:0003924">
    <property type="term" value="F:GTPase activity"/>
    <property type="evidence" value="ECO:0007669"/>
    <property type="project" value="UniProtKB-UniRule"/>
</dbReference>
<dbReference type="GO" id="GO:0097216">
    <property type="term" value="F:guanosine tetraphosphate binding"/>
    <property type="evidence" value="ECO:0007669"/>
    <property type="project" value="UniProtKB-ARBA"/>
</dbReference>
<dbReference type="GO" id="GO:0003743">
    <property type="term" value="F:translation initiation factor activity"/>
    <property type="evidence" value="ECO:0007669"/>
    <property type="project" value="UniProtKB-UniRule"/>
</dbReference>
<dbReference type="CDD" id="cd01887">
    <property type="entry name" value="IF2_eIF5B"/>
    <property type="match status" value="1"/>
</dbReference>
<dbReference type="CDD" id="cd03702">
    <property type="entry name" value="IF2_mtIF2_II"/>
    <property type="match status" value="1"/>
</dbReference>
<dbReference type="CDD" id="cd03692">
    <property type="entry name" value="mtIF2_IVc"/>
    <property type="match status" value="1"/>
</dbReference>
<dbReference type="FunFam" id="2.40.30.10:FF:000007">
    <property type="entry name" value="Translation initiation factor IF-2"/>
    <property type="match status" value="1"/>
</dbReference>
<dbReference type="FunFam" id="2.40.30.10:FF:000008">
    <property type="entry name" value="Translation initiation factor IF-2"/>
    <property type="match status" value="1"/>
</dbReference>
<dbReference type="FunFam" id="3.30.56.50:FF:000001">
    <property type="entry name" value="Translation initiation factor IF-2"/>
    <property type="match status" value="1"/>
</dbReference>
<dbReference type="FunFam" id="3.40.50.10050:FF:000001">
    <property type="entry name" value="Translation initiation factor IF-2"/>
    <property type="match status" value="1"/>
</dbReference>
<dbReference type="FunFam" id="3.40.50.300:FF:000019">
    <property type="entry name" value="Translation initiation factor IF-2"/>
    <property type="match status" value="1"/>
</dbReference>
<dbReference type="Gene3D" id="3.40.50.300">
    <property type="entry name" value="P-loop containing nucleotide triphosphate hydrolases"/>
    <property type="match status" value="1"/>
</dbReference>
<dbReference type="Gene3D" id="3.30.56.50">
    <property type="entry name" value="Putative DNA-binding domain, N-terminal subdomain of bacterial translation initiation factor IF2"/>
    <property type="match status" value="1"/>
</dbReference>
<dbReference type="Gene3D" id="2.40.30.10">
    <property type="entry name" value="Translation factors"/>
    <property type="match status" value="2"/>
</dbReference>
<dbReference type="Gene3D" id="3.40.50.10050">
    <property type="entry name" value="Translation initiation factor IF- 2, domain 3"/>
    <property type="match status" value="1"/>
</dbReference>
<dbReference type="HAMAP" id="MF_00100_B">
    <property type="entry name" value="IF_2_B"/>
    <property type="match status" value="1"/>
</dbReference>
<dbReference type="InterPro" id="IPR009061">
    <property type="entry name" value="DNA-bd_dom_put_sf"/>
</dbReference>
<dbReference type="InterPro" id="IPR053905">
    <property type="entry name" value="EF-G-like_DII"/>
</dbReference>
<dbReference type="InterPro" id="IPR004161">
    <property type="entry name" value="EFTu-like_2"/>
</dbReference>
<dbReference type="InterPro" id="IPR013575">
    <property type="entry name" value="IF2_assoc_dom_bac"/>
</dbReference>
<dbReference type="InterPro" id="IPR044145">
    <property type="entry name" value="IF2_II"/>
</dbReference>
<dbReference type="InterPro" id="IPR006847">
    <property type="entry name" value="IF2_N"/>
</dbReference>
<dbReference type="InterPro" id="IPR027417">
    <property type="entry name" value="P-loop_NTPase"/>
</dbReference>
<dbReference type="InterPro" id="IPR005225">
    <property type="entry name" value="Small_GTP-bd"/>
</dbReference>
<dbReference type="InterPro" id="IPR000795">
    <property type="entry name" value="T_Tr_GTP-bd_dom"/>
</dbReference>
<dbReference type="InterPro" id="IPR000178">
    <property type="entry name" value="TF_IF2_bacterial-like"/>
</dbReference>
<dbReference type="InterPro" id="IPR015760">
    <property type="entry name" value="TIF_IF2"/>
</dbReference>
<dbReference type="InterPro" id="IPR023115">
    <property type="entry name" value="TIF_IF2_dom3"/>
</dbReference>
<dbReference type="InterPro" id="IPR036925">
    <property type="entry name" value="TIF_IF2_dom3_sf"/>
</dbReference>
<dbReference type="InterPro" id="IPR009000">
    <property type="entry name" value="Transl_B-barrel_sf"/>
</dbReference>
<dbReference type="NCBIfam" id="TIGR00487">
    <property type="entry name" value="IF-2"/>
    <property type="match status" value="1"/>
</dbReference>
<dbReference type="NCBIfam" id="TIGR00231">
    <property type="entry name" value="small_GTP"/>
    <property type="match status" value="1"/>
</dbReference>
<dbReference type="PANTHER" id="PTHR43381:SF5">
    <property type="entry name" value="TR-TYPE G DOMAIN-CONTAINING PROTEIN"/>
    <property type="match status" value="1"/>
</dbReference>
<dbReference type="PANTHER" id="PTHR43381">
    <property type="entry name" value="TRANSLATION INITIATION FACTOR IF-2-RELATED"/>
    <property type="match status" value="1"/>
</dbReference>
<dbReference type="Pfam" id="PF22042">
    <property type="entry name" value="EF-G_D2"/>
    <property type="match status" value="1"/>
</dbReference>
<dbReference type="Pfam" id="PF00009">
    <property type="entry name" value="GTP_EFTU"/>
    <property type="match status" value="1"/>
</dbReference>
<dbReference type="Pfam" id="PF03144">
    <property type="entry name" value="GTP_EFTU_D2"/>
    <property type="match status" value="1"/>
</dbReference>
<dbReference type="Pfam" id="PF11987">
    <property type="entry name" value="IF-2"/>
    <property type="match status" value="1"/>
</dbReference>
<dbReference type="Pfam" id="PF08364">
    <property type="entry name" value="IF2_assoc"/>
    <property type="match status" value="1"/>
</dbReference>
<dbReference type="Pfam" id="PF04760">
    <property type="entry name" value="IF2_N"/>
    <property type="match status" value="2"/>
</dbReference>
<dbReference type="SUPFAM" id="SSF52156">
    <property type="entry name" value="Initiation factor IF2/eIF5b, domain 3"/>
    <property type="match status" value="1"/>
</dbReference>
<dbReference type="SUPFAM" id="SSF52540">
    <property type="entry name" value="P-loop containing nucleoside triphosphate hydrolases"/>
    <property type="match status" value="1"/>
</dbReference>
<dbReference type="SUPFAM" id="SSF46955">
    <property type="entry name" value="Putative DNA-binding domain"/>
    <property type="match status" value="1"/>
</dbReference>
<dbReference type="SUPFAM" id="SSF50447">
    <property type="entry name" value="Translation proteins"/>
    <property type="match status" value="2"/>
</dbReference>
<dbReference type="PROSITE" id="PS51722">
    <property type="entry name" value="G_TR_2"/>
    <property type="match status" value="1"/>
</dbReference>
<dbReference type="PROSITE" id="PS01176">
    <property type="entry name" value="IF2"/>
    <property type="match status" value="1"/>
</dbReference>
<organism>
    <name type="scientific">Shigella sonnei (strain Ss046)</name>
    <dbReference type="NCBI Taxonomy" id="300269"/>
    <lineage>
        <taxon>Bacteria</taxon>
        <taxon>Pseudomonadati</taxon>
        <taxon>Pseudomonadota</taxon>
        <taxon>Gammaproteobacteria</taxon>
        <taxon>Enterobacterales</taxon>
        <taxon>Enterobacteriaceae</taxon>
        <taxon>Shigella</taxon>
    </lineage>
</organism>
<feature type="chain" id="PRO_0000228243" description="Translation initiation factor IF-2">
    <location>
        <begin position="1"/>
        <end position="890"/>
    </location>
</feature>
<feature type="domain" description="tr-type G">
    <location>
        <begin position="389"/>
        <end position="558"/>
    </location>
</feature>
<feature type="region of interest" description="Disordered" evidence="3">
    <location>
        <begin position="45"/>
        <end position="304"/>
    </location>
</feature>
<feature type="region of interest" description="G1" evidence="1">
    <location>
        <begin position="398"/>
        <end position="405"/>
    </location>
</feature>
<feature type="region of interest" description="G2" evidence="1">
    <location>
        <begin position="423"/>
        <end position="427"/>
    </location>
</feature>
<feature type="region of interest" description="G3" evidence="1">
    <location>
        <begin position="444"/>
        <end position="447"/>
    </location>
</feature>
<feature type="region of interest" description="G4" evidence="1">
    <location>
        <begin position="498"/>
        <end position="501"/>
    </location>
</feature>
<feature type="region of interest" description="G5" evidence="1">
    <location>
        <begin position="534"/>
        <end position="536"/>
    </location>
</feature>
<feature type="compositionally biased region" description="Polar residues" evidence="3">
    <location>
        <begin position="67"/>
        <end position="81"/>
    </location>
</feature>
<feature type="compositionally biased region" description="Basic and acidic residues" evidence="3">
    <location>
        <begin position="92"/>
        <end position="217"/>
    </location>
</feature>
<feature type="compositionally biased region" description="Basic residues" evidence="3">
    <location>
        <begin position="252"/>
        <end position="266"/>
    </location>
</feature>
<feature type="compositionally biased region" description="Basic and acidic residues" evidence="3">
    <location>
        <begin position="267"/>
        <end position="280"/>
    </location>
</feature>
<feature type="binding site" evidence="2">
    <location>
        <begin position="398"/>
        <end position="405"/>
    </location>
    <ligand>
        <name>GTP</name>
        <dbReference type="ChEBI" id="CHEBI:37565"/>
    </ligand>
</feature>
<feature type="binding site" evidence="2">
    <location>
        <begin position="444"/>
        <end position="448"/>
    </location>
    <ligand>
        <name>GTP</name>
        <dbReference type="ChEBI" id="CHEBI:37565"/>
    </ligand>
</feature>
<feature type="binding site" evidence="2">
    <location>
        <begin position="498"/>
        <end position="501"/>
    </location>
    <ligand>
        <name>GTP</name>
        <dbReference type="ChEBI" id="CHEBI:37565"/>
    </ligand>
</feature>
<feature type="modified residue" description="N6-acetyllysine" evidence="1">
    <location>
        <position position="808"/>
    </location>
</feature>
<protein>
    <recommendedName>
        <fullName evidence="2">Translation initiation factor IF-2</fullName>
    </recommendedName>
</protein>
<keyword id="KW-0007">Acetylation</keyword>
<keyword id="KW-0963">Cytoplasm</keyword>
<keyword id="KW-0342">GTP-binding</keyword>
<keyword id="KW-0396">Initiation factor</keyword>
<keyword id="KW-0547">Nucleotide-binding</keyword>
<keyword id="KW-0648">Protein biosynthesis</keyword>
<keyword id="KW-1185">Reference proteome</keyword>
<proteinExistence type="inferred from homology"/>
<name>IF2_SHISS</name>
<gene>
    <name evidence="2" type="primary">infB</name>
    <name type="ordered locus">SSON_3314</name>
</gene>